<keyword id="KW-0963">Cytoplasm</keyword>
<keyword id="KW-0255">Endonuclease</keyword>
<keyword id="KW-0378">Hydrolase</keyword>
<keyword id="KW-0464">Manganese</keyword>
<keyword id="KW-0479">Metal-binding</keyword>
<keyword id="KW-0540">Nuclease</keyword>
<gene>
    <name evidence="1" type="primary">rnhB</name>
    <name type="ordered locus">BCQ_3622</name>
</gene>
<sequence>MQKVTIQEAEHLLQEIMSEEDDRFQILIKDERKGVQKLISKWYKQKELAQKEKEKFLEMSKYENALREKGLTYIAGIDEVGRGPLAGPVVTAAVVLPEDFYIPGLNDSKKLSEAKRERFYDEIKAQAIAIGVGIVSPQVIDEINIYQATKQAMLDAVANLSCTPQYLLIDAMKLPTPIPQTSIIKGDAKSISISAASIIAKVTRDRMMKELGEKYPAYGFEQHMGYGTKQHLEAIEAHGILEEHRKSFAPIKDMIQK</sequence>
<organism>
    <name type="scientific">Bacillus cereus (strain Q1)</name>
    <dbReference type="NCBI Taxonomy" id="361100"/>
    <lineage>
        <taxon>Bacteria</taxon>
        <taxon>Bacillati</taxon>
        <taxon>Bacillota</taxon>
        <taxon>Bacilli</taxon>
        <taxon>Bacillales</taxon>
        <taxon>Bacillaceae</taxon>
        <taxon>Bacillus</taxon>
        <taxon>Bacillus cereus group</taxon>
    </lineage>
</organism>
<protein>
    <recommendedName>
        <fullName evidence="1">Ribonuclease HII</fullName>
        <shortName evidence="1">RNase HII</shortName>
        <ecNumber evidence="1">3.1.26.4</ecNumber>
    </recommendedName>
</protein>
<dbReference type="EC" id="3.1.26.4" evidence="1"/>
<dbReference type="EMBL" id="CP000227">
    <property type="protein sequence ID" value="ACM14050.1"/>
    <property type="molecule type" value="Genomic_DNA"/>
</dbReference>
<dbReference type="SMR" id="B9IVC6"/>
<dbReference type="KEGG" id="bcq:BCQ_3622"/>
<dbReference type="HOGENOM" id="CLU_036532_2_1_9"/>
<dbReference type="Proteomes" id="UP000000441">
    <property type="component" value="Chromosome"/>
</dbReference>
<dbReference type="GO" id="GO:0005737">
    <property type="term" value="C:cytoplasm"/>
    <property type="evidence" value="ECO:0007669"/>
    <property type="project" value="UniProtKB-SubCell"/>
</dbReference>
<dbReference type="GO" id="GO:0032299">
    <property type="term" value="C:ribonuclease H2 complex"/>
    <property type="evidence" value="ECO:0007669"/>
    <property type="project" value="TreeGrafter"/>
</dbReference>
<dbReference type="GO" id="GO:0030145">
    <property type="term" value="F:manganese ion binding"/>
    <property type="evidence" value="ECO:0007669"/>
    <property type="project" value="UniProtKB-UniRule"/>
</dbReference>
<dbReference type="GO" id="GO:0003723">
    <property type="term" value="F:RNA binding"/>
    <property type="evidence" value="ECO:0007669"/>
    <property type="project" value="InterPro"/>
</dbReference>
<dbReference type="GO" id="GO:0004523">
    <property type="term" value="F:RNA-DNA hybrid ribonuclease activity"/>
    <property type="evidence" value="ECO:0007669"/>
    <property type="project" value="UniProtKB-UniRule"/>
</dbReference>
<dbReference type="GO" id="GO:0043137">
    <property type="term" value="P:DNA replication, removal of RNA primer"/>
    <property type="evidence" value="ECO:0007669"/>
    <property type="project" value="TreeGrafter"/>
</dbReference>
<dbReference type="GO" id="GO:0006298">
    <property type="term" value="P:mismatch repair"/>
    <property type="evidence" value="ECO:0007669"/>
    <property type="project" value="TreeGrafter"/>
</dbReference>
<dbReference type="CDD" id="cd07182">
    <property type="entry name" value="RNase_HII_bacteria_HII_like"/>
    <property type="match status" value="1"/>
</dbReference>
<dbReference type="FunFam" id="3.30.420.10:FF:000006">
    <property type="entry name" value="Ribonuclease HII"/>
    <property type="match status" value="1"/>
</dbReference>
<dbReference type="Gene3D" id="3.30.420.10">
    <property type="entry name" value="Ribonuclease H-like superfamily/Ribonuclease H"/>
    <property type="match status" value="1"/>
</dbReference>
<dbReference type="HAMAP" id="MF_00052_B">
    <property type="entry name" value="RNase_HII_B"/>
    <property type="match status" value="1"/>
</dbReference>
<dbReference type="InterPro" id="IPR022898">
    <property type="entry name" value="RNase_HII"/>
</dbReference>
<dbReference type="InterPro" id="IPR001352">
    <property type="entry name" value="RNase_HII/HIII"/>
</dbReference>
<dbReference type="InterPro" id="IPR024567">
    <property type="entry name" value="RNase_HII/HIII_dom"/>
</dbReference>
<dbReference type="InterPro" id="IPR012337">
    <property type="entry name" value="RNaseH-like_sf"/>
</dbReference>
<dbReference type="InterPro" id="IPR036397">
    <property type="entry name" value="RNaseH_sf"/>
</dbReference>
<dbReference type="NCBIfam" id="NF000594">
    <property type="entry name" value="PRK00015.1-1"/>
    <property type="match status" value="1"/>
</dbReference>
<dbReference type="NCBIfam" id="NF000595">
    <property type="entry name" value="PRK00015.1-3"/>
    <property type="match status" value="1"/>
</dbReference>
<dbReference type="PANTHER" id="PTHR10954">
    <property type="entry name" value="RIBONUCLEASE H2 SUBUNIT A"/>
    <property type="match status" value="1"/>
</dbReference>
<dbReference type="PANTHER" id="PTHR10954:SF18">
    <property type="entry name" value="RIBONUCLEASE HII"/>
    <property type="match status" value="1"/>
</dbReference>
<dbReference type="Pfam" id="PF01351">
    <property type="entry name" value="RNase_HII"/>
    <property type="match status" value="1"/>
</dbReference>
<dbReference type="SUPFAM" id="SSF53098">
    <property type="entry name" value="Ribonuclease H-like"/>
    <property type="match status" value="1"/>
</dbReference>
<dbReference type="PROSITE" id="PS51975">
    <property type="entry name" value="RNASE_H_2"/>
    <property type="match status" value="1"/>
</dbReference>
<accession>B9IVC6</accession>
<comment type="function">
    <text evidence="1">Endonuclease that specifically degrades the RNA of RNA-DNA hybrids.</text>
</comment>
<comment type="catalytic activity">
    <reaction evidence="1">
        <text>Endonucleolytic cleavage to 5'-phosphomonoester.</text>
        <dbReference type="EC" id="3.1.26.4"/>
    </reaction>
</comment>
<comment type="cofactor">
    <cofactor evidence="1">
        <name>Mn(2+)</name>
        <dbReference type="ChEBI" id="CHEBI:29035"/>
    </cofactor>
    <cofactor evidence="1">
        <name>Mg(2+)</name>
        <dbReference type="ChEBI" id="CHEBI:18420"/>
    </cofactor>
    <text evidence="1">Manganese or magnesium. Binds 1 divalent metal ion per monomer in the absence of substrate. May bind a second metal ion after substrate binding.</text>
</comment>
<comment type="subcellular location">
    <subcellularLocation>
        <location evidence="1">Cytoplasm</location>
    </subcellularLocation>
</comment>
<comment type="similarity">
    <text evidence="1">Belongs to the RNase HII family.</text>
</comment>
<reference key="1">
    <citation type="journal article" date="2009" name="J. Bacteriol.">
        <title>Complete genome sequence of the extremophilic Bacillus cereus strain Q1 with industrial applications.</title>
        <authorList>
            <person name="Xiong Z."/>
            <person name="Jiang Y."/>
            <person name="Qi D."/>
            <person name="Lu H."/>
            <person name="Yang F."/>
            <person name="Yang J."/>
            <person name="Chen L."/>
            <person name="Sun L."/>
            <person name="Xu X."/>
            <person name="Xue Y."/>
            <person name="Zhu Y."/>
            <person name="Jin Q."/>
        </authorList>
    </citation>
    <scope>NUCLEOTIDE SEQUENCE [LARGE SCALE GENOMIC DNA]</scope>
    <source>
        <strain>Q1</strain>
    </source>
</reference>
<name>RNH2_BACCQ</name>
<evidence type="ECO:0000255" key="1">
    <source>
        <dbReference type="HAMAP-Rule" id="MF_00052"/>
    </source>
</evidence>
<evidence type="ECO:0000255" key="2">
    <source>
        <dbReference type="PROSITE-ProRule" id="PRU01319"/>
    </source>
</evidence>
<proteinExistence type="inferred from homology"/>
<feature type="chain" id="PRO_1000194443" description="Ribonuclease HII">
    <location>
        <begin position="1"/>
        <end position="257"/>
    </location>
</feature>
<feature type="domain" description="RNase H type-2" evidence="2">
    <location>
        <begin position="72"/>
        <end position="257"/>
    </location>
</feature>
<feature type="binding site" evidence="1">
    <location>
        <position position="78"/>
    </location>
    <ligand>
        <name>a divalent metal cation</name>
        <dbReference type="ChEBI" id="CHEBI:60240"/>
    </ligand>
</feature>
<feature type="binding site" evidence="1">
    <location>
        <position position="79"/>
    </location>
    <ligand>
        <name>a divalent metal cation</name>
        <dbReference type="ChEBI" id="CHEBI:60240"/>
    </ligand>
</feature>
<feature type="binding site" evidence="1">
    <location>
        <position position="170"/>
    </location>
    <ligand>
        <name>a divalent metal cation</name>
        <dbReference type="ChEBI" id="CHEBI:60240"/>
    </ligand>
</feature>